<gene>
    <name evidence="1" type="primary">ribL</name>
    <name type="ordered locus">Msm_0859</name>
</gene>
<comment type="function">
    <text evidence="1">Catalyzes the transfer of the AMP portion of ATP to flavin mononucleotide (FMN) to produce flavin adenine dinucleotide (FAD) coenzyme.</text>
</comment>
<comment type="catalytic activity">
    <reaction evidence="1">
        <text>FMN + ATP + H(+) = FAD + diphosphate</text>
        <dbReference type="Rhea" id="RHEA:17237"/>
        <dbReference type="ChEBI" id="CHEBI:15378"/>
        <dbReference type="ChEBI" id="CHEBI:30616"/>
        <dbReference type="ChEBI" id="CHEBI:33019"/>
        <dbReference type="ChEBI" id="CHEBI:57692"/>
        <dbReference type="ChEBI" id="CHEBI:58210"/>
        <dbReference type="EC" id="2.7.7.2"/>
    </reaction>
</comment>
<comment type="cofactor">
    <cofactor evidence="1">
        <name>a divalent metal cation</name>
        <dbReference type="ChEBI" id="CHEBI:60240"/>
    </cofactor>
</comment>
<comment type="pathway">
    <text evidence="1">Cofactor biosynthesis; FAD biosynthesis; FAD from FMN: step 1/1.</text>
</comment>
<comment type="subunit">
    <text evidence="1">Homodimer.</text>
</comment>
<comment type="similarity">
    <text evidence="1">Belongs to the archaeal FAD synthase family.</text>
</comment>
<accession>A5ULI6</accession>
<name>RIBL_METS3</name>
<organism>
    <name type="scientific">Methanobrevibacter smithii (strain ATCC 35061 / DSM 861 / OCM 144 / PS)</name>
    <dbReference type="NCBI Taxonomy" id="420247"/>
    <lineage>
        <taxon>Archaea</taxon>
        <taxon>Methanobacteriati</taxon>
        <taxon>Methanobacteriota</taxon>
        <taxon>Methanomada group</taxon>
        <taxon>Methanobacteria</taxon>
        <taxon>Methanobacteriales</taxon>
        <taxon>Methanobacteriaceae</taxon>
        <taxon>Methanobrevibacter</taxon>
    </lineage>
</organism>
<proteinExistence type="inferred from homology"/>
<reference key="1">
    <citation type="journal article" date="2007" name="Proc. Natl. Acad. Sci. U.S.A.">
        <title>Genomic and metabolic adaptations of Methanobrevibacter smithii to the human gut.</title>
        <authorList>
            <person name="Samuel B.S."/>
            <person name="Hansen E.E."/>
            <person name="Manchester J.K."/>
            <person name="Coutinho P.M."/>
            <person name="Henrissat B."/>
            <person name="Fulton R."/>
            <person name="Latreille P."/>
            <person name="Kim K."/>
            <person name="Wilson R.K."/>
            <person name="Gordon J.I."/>
        </authorList>
    </citation>
    <scope>NUCLEOTIDE SEQUENCE [LARGE SCALE GENOMIC DNA]</scope>
    <source>
        <strain>ATCC 35061 / DSM 861 / OCM 144 / PS</strain>
    </source>
</reference>
<feature type="chain" id="PRO_0000406246" description="FAD synthase">
    <location>
        <begin position="1"/>
        <end position="153"/>
    </location>
</feature>
<feature type="binding site" evidence="1">
    <location>
        <begin position="9"/>
        <end position="10"/>
    </location>
    <ligand>
        <name>ATP</name>
        <dbReference type="ChEBI" id="CHEBI:30616"/>
    </ligand>
</feature>
<feature type="binding site" evidence="1">
    <location>
        <begin position="14"/>
        <end position="17"/>
    </location>
    <ligand>
        <name>ATP</name>
        <dbReference type="ChEBI" id="CHEBI:30616"/>
    </ligand>
</feature>
<feature type="binding site" evidence="1">
    <location>
        <position position="97"/>
    </location>
    <ligand>
        <name>ATP</name>
        <dbReference type="ChEBI" id="CHEBI:30616"/>
    </ligand>
</feature>
<feature type="binding site" evidence="1">
    <location>
        <position position="124"/>
    </location>
    <ligand>
        <name>ATP</name>
        <dbReference type="ChEBI" id="CHEBI:30616"/>
    </ligand>
</feature>
<evidence type="ECO:0000255" key="1">
    <source>
        <dbReference type="HAMAP-Rule" id="MF_02115"/>
    </source>
</evidence>
<protein>
    <recommendedName>
        <fullName evidence="1">FAD synthase</fullName>
        <ecNumber evidence="1">2.7.7.2</ecNumber>
    </recommendedName>
    <alternativeName>
        <fullName evidence="1">FMN adenylyltransferase</fullName>
    </alternativeName>
    <alternativeName>
        <fullName evidence="1">Flavin adenine dinucleotide synthase</fullName>
    </alternativeName>
</protein>
<keyword id="KW-0067">ATP-binding</keyword>
<keyword id="KW-0274">FAD</keyword>
<keyword id="KW-0285">Flavoprotein</keyword>
<keyword id="KW-0288">FMN</keyword>
<keyword id="KW-0547">Nucleotide-binding</keyword>
<keyword id="KW-0548">Nucleotidyltransferase</keyword>
<keyword id="KW-0808">Transferase</keyword>
<dbReference type="EC" id="2.7.7.2" evidence="1"/>
<dbReference type="EMBL" id="CP000678">
    <property type="protein sequence ID" value="ABQ87064.1"/>
    <property type="molecule type" value="Genomic_DNA"/>
</dbReference>
<dbReference type="SMR" id="A5ULI6"/>
<dbReference type="STRING" id="420247.Msm_0859"/>
<dbReference type="EnsemblBacteria" id="ABQ87064">
    <property type="protein sequence ID" value="ABQ87064"/>
    <property type="gene ID" value="Msm_0859"/>
</dbReference>
<dbReference type="KEGG" id="msi:Msm_0859"/>
<dbReference type="PATRIC" id="fig|420247.28.peg.856"/>
<dbReference type="eggNOG" id="arCOG01222">
    <property type="taxonomic scope" value="Archaea"/>
</dbReference>
<dbReference type="HOGENOM" id="CLU_034585_2_1_2"/>
<dbReference type="UniPathway" id="UPA00277">
    <property type="reaction ID" value="UER00407"/>
</dbReference>
<dbReference type="Proteomes" id="UP000001992">
    <property type="component" value="Chromosome"/>
</dbReference>
<dbReference type="GO" id="GO:0005524">
    <property type="term" value="F:ATP binding"/>
    <property type="evidence" value="ECO:0007669"/>
    <property type="project" value="UniProtKB-UniRule"/>
</dbReference>
<dbReference type="GO" id="GO:0003919">
    <property type="term" value="F:FMN adenylyltransferase activity"/>
    <property type="evidence" value="ECO:0007669"/>
    <property type="project" value="UniProtKB-UniRule"/>
</dbReference>
<dbReference type="GO" id="GO:0006747">
    <property type="term" value="P:FAD biosynthetic process"/>
    <property type="evidence" value="ECO:0007669"/>
    <property type="project" value="UniProtKB-UniRule"/>
</dbReference>
<dbReference type="GO" id="GO:0046444">
    <property type="term" value="P:FMN metabolic process"/>
    <property type="evidence" value="ECO:0007669"/>
    <property type="project" value="UniProtKB-UniRule"/>
</dbReference>
<dbReference type="Gene3D" id="3.40.50.620">
    <property type="entry name" value="HUPs"/>
    <property type="match status" value="1"/>
</dbReference>
<dbReference type="HAMAP" id="MF_02115">
    <property type="entry name" value="FAD_synth_arch"/>
    <property type="match status" value="1"/>
</dbReference>
<dbReference type="InterPro" id="IPR050385">
    <property type="entry name" value="Archaeal_FAD_synthase"/>
</dbReference>
<dbReference type="InterPro" id="IPR004821">
    <property type="entry name" value="Cyt_trans-like"/>
</dbReference>
<dbReference type="InterPro" id="IPR024902">
    <property type="entry name" value="FAD_synth_RibL"/>
</dbReference>
<dbReference type="InterPro" id="IPR014729">
    <property type="entry name" value="Rossmann-like_a/b/a_fold"/>
</dbReference>
<dbReference type="NCBIfam" id="TIGR00125">
    <property type="entry name" value="cyt_tran_rel"/>
    <property type="match status" value="1"/>
</dbReference>
<dbReference type="PANTHER" id="PTHR43793">
    <property type="entry name" value="FAD SYNTHASE"/>
    <property type="match status" value="1"/>
</dbReference>
<dbReference type="PANTHER" id="PTHR43793:SF1">
    <property type="entry name" value="FAD SYNTHASE"/>
    <property type="match status" value="1"/>
</dbReference>
<dbReference type="Pfam" id="PF01467">
    <property type="entry name" value="CTP_transf_like"/>
    <property type="match status" value="1"/>
</dbReference>
<dbReference type="SUPFAM" id="SSF52374">
    <property type="entry name" value="Nucleotidylyl transferase"/>
    <property type="match status" value="1"/>
</dbReference>
<sequence length="153" mass="17307">MKKVMATGTFDLLHPGHGIYLNEAKKLGGEDAKLYVVIARDSTVEKRKRYPIVGEQQRLELIKMIKGVDEAYLGNENGDFLKIVEEINPDIIAIGADQRHDITKLQKAINKRGLKAKVERVKAYHNAELDSSCKIIKKIKKMDFKGKINDNCD</sequence>